<dbReference type="EMBL" id="U16310">
    <property type="protein sequence ID" value="AAA99705.1"/>
    <property type="molecule type" value="mRNA"/>
</dbReference>
<dbReference type="EMBL" id="M38578">
    <property type="protein sequence ID" value="AAA50031.1"/>
    <property type="molecule type" value="Genomic_DNA"/>
</dbReference>
<dbReference type="PIR" id="PS0408">
    <property type="entry name" value="PS0408"/>
</dbReference>
<dbReference type="SMR" id="Q03357"/>
<dbReference type="FunCoup" id="Q03357">
    <property type="interactions" value="4"/>
</dbReference>
<dbReference type="STRING" id="7955.ENSDARP00000132799"/>
<dbReference type="PaxDb" id="7955-ENSDARP00000073690"/>
<dbReference type="AGR" id="ZFIN:ZDB-GENE-980526-322"/>
<dbReference type="ZFIN" id="ZDB-GENE-980526-322">
    <property type="gene designation" value="msx2a"/>
</dbReference>
<dbReference type="eggNOG" id="KOG0492">
    <property type="taxonomic scope" value="Eukaryota"/>
</dbReference>
<dbReference type="InParanoid" id="Q03357"/>
<dbReference type="PRO" id="PR:Q03357"/>
<dbReference type="Proteomes" id="UP000000437">
    <property type="component" value="Unplaced"/>
</dbReference>
<dbReference type="GO" id="GO:0005634">
    <property type="term" value="C:nucleus"/>
    <property type="evidence" value="ECO:0000318"/>
    <property type="project" value="GO_Central"/>
</dbReference>
<dbReference type="GO" id="GO:0000981">
    <property type="term" value="F:DNA-binding transcription factor activity, RNA polymerase II-specific"/>
    <property type="evidence" value="ECO:0000318"/>
    <property type="project" value="GO_Central"/>
</dbReference>
<dbReference type="GO" id="GO:0000977">
    <property type="term" value="F:RNA polymerase II transcription regulatory region sequence-specific DNA binding"/>
    <property type="evidence" value="ECO:0000318"/>
    <property type="project" value="GO_Central"/>
</dbReference>
<dbReference type="GO" id="GO:0048598">
    <property type="term" value="P:embryonic morphogenesis"/>
    <property type="evidence" value="ECO:0000318"/>
    <property type="project" value="GO_Central"/>
</dbReference>
<dbReference type="GO" id="GO:0006357">
    <property type="term" value="P:regulation of transcription by RNA polymerase II"/>
    <property type="evidence" value="ECO:0000318"/>
    <property type="project" value="GO_Central"/>
</dbReference>
<dbReference type="CDD" id="cd00086">
    <property type="entry name" value="homeodomain"/>
    <property type="match status" value="1"/>
</dbReference>
<dbReference type="FunFam" id="1.10.10.60:FF:000775">
    <property type="entry name" value="Muscle segment homeobox 2a"/>
    <property type="match status" value="1"/>
</dbReference>
<dbReference type="Gene3D" id="1.10.10.60">
    <property type="entry name" value="Homeodomain-like"/>
    <property type="match status" value="1"/>
</dbReference>
<dbReference type="InterPro" id="IPR001356">
    <property type="entry name" value="HD"/>
</dbReference>
<dbReference type="InterPro" id="IPR020479">
    <property type="entry name" value="HD_metazoa"/>
</dbReference>
<dbReference type="InterPro" id="IPR017970">
    <property type="entry name" value="Homeobox_CS"/>
</dbReference>
<dbReference type="InterPro" id="IPR009057">
    <property type="entry name" value="Homeodomain-like_sf"/>
</dbReference>
<dbReference type="InterPro" id="IPR050674">
    <property type="entry name" value="Msh_Homeobox_Regulators"/>
</dbReference>
<dbReference type="PANTHER" id="PTHR24338">
    <property type="entry name" value="HOMEOBOX PROTEIN MSX"/>
    <property type="match status" value="1"/>
</dbReference>
<dbReference type="PANTHER" id="PTHR24338:SF8">
    <property type="entry name" value="HOMEOBOX PROTEIN MSX-1"/>
    <property type="match status" value="1"/>
</dbReference>
<dbReference type="Pfam" id="PF00046">
    <property type="entry name" value="Homeodomain"/>
    <property type="match status" value="1"/>
</dbReference>
<dbReference type="PRINTS" id="PR00024">
    <property type="entry name" value="HOMEOBOX"/>
</dbReference>
<dbReference type="SMART" id="SM00389">
    <property type="entry name" value="HOX"/>
    <property type="match status" value="1"/>
</dbReference>
<dbReference type="SUPFAM" id="SSF46689">
    <property type="entry name" value="Homeodomain-like"/>
    <property type="match status" value="1"/>
</dbReference>
<dbReference type="PROSITE" id="PS00027">
    <property type="entry name" value="HOMEOBOX_1"/>
    <property type="match status" value="1"/>
</dbReference>
<dbReference type="PROSITE" id="PS50071">
    <property type="entry name" value="HOMEOBOX_2"/>
    <property type="match status" value="1"/>
</dbReference>
<proteinExistence type="evidence at transcript level"/>
<sequence>MVLTQNVDTFSGMISANHKSKVSSDEDDDDHGSRSVRTQSLPFSVDALMSTKERSESTSQGSIHMTRIINQDDRSIYSDSVDFIKRRESAKEDSAWINKPRLSTSPRSQSPTICPLRKHKTNRKPRTPFTTAQLLALERKFRQKQYLSIAERAEFSSSLSLTETQVKIWFQNRRAKAKRLQEAELERFKMASKPILHPGLTLPFPLCTQPQTAALVCGQSFPFSRHMLPFAPIGIYSTPMGYSMCHLSKDGYSVEPV</sequence>
<evidence type="ECO:0000255" key="1">
    <source>
        <dbReference type="PROSITE-ProRule" id="PRU00108"/>
    </source>
</evidence>
<evidence type="ECO:0000256" key="2">
    <source>
        <dbReference type="SAM" id="MobiDB-lite"/>
    </source>
</evidence>
<evidence type="ECO:0000305" key="3"/>
<keyword id="KW-0217">Developmental protein</keyword>
<keyword id="KW-0238">DNA-binding</keyword>
<keyword id="KW-0371">Homeobox</keyword>
<keyword id="KW-0539">Nucleus</keyword>
<keyword id="KW-1185">Reference proteome</keyword>
<reference key="1">
    <citation type="journal article" date="1995" name="Development">
        <title>Differential induction of four msx homeobox genes during fin development and regeneration in zebrafish.</title>
        <authorList>
            <person name="Akimenko M.-A."/>
            <person name="Johnson S.L."/>
            <person name="Westerfield M."/>
            <person name="Ekker M."/>
        </authorList>
    </citation>
    <scope>NUCLEOTIDE SEQUENCE [MRNA]</scope>
    <source>
        <tissue>Embryo</tissue>
    </source>
</reference>
<reference key="2">
    <citation type="journal article" date="1991" name="Gene">
        <title>Cloning and evolutionary analysis of msh-like homeobox genes from mouse, zebrafish and ascidian.</title>
        <authorList>
            <person name="Holland P.W.H."/>
        </authorList>
    </citation>
    <scope>NUCLEOTIDE SEQUENCE [GENOMIC DNA] OF 121-181</scope>
</reference>
<protein>
    <recommendedName>
        <fullName>Homeobox protein MSH-A</fullName>
    </recommendedName>
</protein>
<comment type="function">
    <text>Probable morphogenetic role.</text>
</comment>
<comment type="subcellular location">
    <subcellularLocation>
        <location>Nucleus</location>
    </subcellularLocation>
</comment>
<comment type="similarity">
    <text evidence="3">Belongs to the Msh homeobox family.</text>
</comment>
<gene>
    <name type="primary">msxa</name>
    <name type="synonym">msh-a</name>
</gene>
<organism>
    <name type="scientific">Danio rerio</name>
    <name type="common">Zebrafish</name>
    <name type="synonym">Brachydanio rerio</name>
    <dbReference type="NCBI Taxonomy" id="7955"/>
    <lineage>
        <taxon>Eukaryota</taxon>
        <taxon>Metazoa</taxon>
        <taxon>Chordata</taxon>
        <taxon>Craniata</taxon>
        <taxon>Vertebrata</taxon>
        <taxon>Euteleostomi</taxon>
        <taxon>Actinopterygii</taxon>
        <taxon>Neopterygii</taxon>
        <taxon>Teleostei</taxon>
        <taxon>Ostariophysi</taxon>
        <taxon>Cypriniformes</taxon>
        <taxon>Danionidae</taxon>
        <taxon>Danioninae</taxon>
        <taxon>Danio</taxon>
    </lineage>
</organism>
<accession>Q03357</accession>
<name>MSXA_DANRE</name>
<feature type="chain" id="PRO_0000049066" description="Homeobox protein MSH-A">
    <location>
        <begin position="1"/>
        <end position="257"/>
    </location>
</feature>
<feature type="DNA-binding region" description="Homeobox" evidence="1">
    <location>
        <begin position="122"/>
        <end position="181"/>
    </location>
</feature>
<feature type="region of interest" description="Disordered" evidence="2">
    <location>
        <begin position="18"/>
        <end position="62"/>
    </location>
</feature>
<feature type="region of interest" description="Disordered" evidence="2">
    <location>
        <begin position="100"/>
        <end position="124"/>
    </location>
</feature>
<feature type="compositionally biased region" description="Polar residues" evidence="2">
    <location>
        <begin position="101"/>
        <end position="112"/>
    </location>
</feature>